<gene>
    <name type="ordered locus">MJ0012</name>
</gene>
<accession>Q60328</accession>
<evidence type="ECO:0000250" key="1">
    <source>
        <dbReference type="UniProtKB" id="Q7DF80"/>
    </source>
</evidence>
<evidence type="ECO:0000305" key="2"/>
<proteinExistence type="inferred from homology"/>
<dbReference type="EMBL" id="L77117">
    <property type="status" value="NOT_ANNOTATED_CDS"/>
    <property type="molecule type" value="Genomic_DNA"/>
</dbReference>
<dbReference type="PIR" id="D64301">
    <property type="entry name" value="D64301"/>
</dbReference>
<dbReference type="SMR" id="Q60328"/>
<dbReference type="InParanoid" id="Q60328"/>
<dbReference type="PhylomeDB" id="Q60328"/>
<dbReference type="Proteomes" id="UP000000805">
    <property type="component" value="Chromosome"/>
</dbReference>
<dbReference type="GO" id="GO:0003677">
    <property type="term" value="F:DNA binding"/>
    <property type="evidence" value="ECO:0007669"/>
    <property type="project" value="UniProtKB-KW"/>
</dbReference>
<dbReference type="GO" id="GO:0046872">
    <property type="term" value="F:metal ion binding"/>
    <property type="evidence" value="ECO:0007669"/>
    <property type="project" value="UniProtKB-KW"/>
</dbReference>
<dbReference type="GO" id="GO:0006310">
    <property type="term" value="P:DNA recombination"/>
    <property type="evidence" value="ECO:0007669"/>
    <property type="project" value="UniProtKB-KW"/>
</dbReference>
<dbReference type="GO" id="GO:0032196">
    <property type="term" value="P:transposition"/>
    <property type="evidence" value="ECO:0007669"/>
    <property type="project" value="UniProtKB-KW"/>
</dbReference>
<dbReference type="InterPro" id="IPR010095">
    <property type="entry name" value="Cas12f1-like_TNB"/>
</dbReference>
<dbReference type="NCBIfam" id="TIGR01766">
    <property type="entry name" value="IS200/IS605 family accessory protein TnpB-like domain"/>
    <property type="match status" value="1"/>
</dbReference>
<dbReference type="Pfam" id="PF07282">
    <property type="entry name" value="Cas12f1-like_TNB"/>
    <property type="match status" value="1"/>
</dbReference>
<organism>
    <name type="scientific">Methanocaldococcus jannaschii (strain ATCC 43067 / DSM 2661 / JAL-1 / JCM 10045 / NBRC 100440)</name>
    <name type="common">Methanococcus jannaschii</name>
    <dbReference type="NCBI Taxonomy" id="243232"/>
    <lineage>
        <taxon>Archaea</taxon>
        <taxon>Methanobacteriati</taxon>
        <taxon>Methanobacteriota</taxon>
        <taxon>Methanomada group</taxon>
        <taxon>Methanococci</taxon>
        <taxon>Methanococcales</taxon>
        <taxon>Methanocaldococcaceae</taxon>
        <taxon>Methanocaldococcus</taxon>
    </lineage>
</organism>
<reference key="1">
    <citation type="journal article" date="1996" name="Science">
        <title>Complete genome sequence of the methanogenic archaeon, Methanococcus jannaschii.</title>
        <authorList>
            <person name="Bult C.J."/>
            <person name="White O."/>
            <person name="Olsen G.J."/>
            <person name="Zhou L."/>
            <person name="Fleischmann R.D."/>
            <person name="Sutton G.G."/>
            <person name="Blake J.A."/>
            <person name="FitzGerald L.M."/>
            <person name="Clayton R.A."/>
            <person name="Gocayne J.D."/>
            <person name="Kerlavage A.R."/>
            <person name="Dougherty B.A."/>
            <person name="Tomb J.-F."/>
            <person name="Adams M.D."/>
            <person name="Reich C.I."/>
            <person name="Overbeek R."/>
            <person name="Kirkness E.F."/>
            <person name="Weinstock K.G."/>
            <person name="Merrick J.M."/>
            <person name="Glodek A."/>
            <person name="Scott J.L."/>
            <person name="Geoghagen N.S.M."/>
            <person name="Weidman J.F."/>
            <person name="Fuhrmann J.L."/>
            <person name="Nguyen D."/>
            <person name="Utterback T.R."/>
            <person name="Kelley J.M."/>
            <person name="Peterson J.D."/>
            <person name="Sadow P.W."/>
            <person name="Hanna M.C."/>
            <person name="Cotton M.D."/>
            <person name="Roberts K.M."/>
            <person name="Hurst M.A."/>
            <person name="Kaine B.P."/>
            <person name="Borodovsky M."/>
            <person name="Klenk H.-P."/>
            <person name="Fraser C.M."/>
            <person name="Smith H.O."/>
            <person name="Woese C.R."/>
            <person name="Venter J.C."/>
        </authorList>
    </citation>
    <scope>NUCLEOTIDE SEQUENCE [LARGE SCALE GENOMIC DNA]</scope>
    <source>
        <strain>ATCC 43067 / DSM 2661 / JAL-1 / JCM 10045 / NBRC 100440</strain>
    </source>
</reference>
<comment type="similarity">
    <text evidence="2">Belongs to the transposase 35 family.</text>
</comment>
<protein>
    <recommendedName>
        <fullName>TnpB-like protein MJ0012</fullName>
    </recommendedName>
</protein>
<sequence length="208" mass="24347">MKKYWNRRKNRVEDFINKLTSQLSKLFPDAIFIFEDLDKFNMYDKNSNFNRNLDRTNWRKIAKKLEYKSVVLYVNPHYTSKTCPVCGSKMKSQEGQVVKCDKCGIFDRQFVRCYNIFKRGVELAKKLLGGVGVPVAGAEVDDLLSNEPRGELRLVKPNPNVEAKLPVRKSNRRFELQNPKDFVQIFDFPLMVYTVDLNGKYLKIYNCP</sequence>
<keyword id="KW-0233">DNA recombination</keyword>
<keyword id="KW-0238">DNA-binding</keyword>
<keyword id="KW-0479">Metal-binding</keyword>
<keyword id="KW-1185">Reference proteome</keyword>
<keyword id="KW-0814">Transposable element</keyword>
<keyword id="KW-0815">Transposition</keyword>
<keyword id="KW-0862">Zinc</keyword>
<name>Y012_METJA</name>
<feature type="chain" id="PRO_0000106652" description="TnpB-like protein MJ0012">
    <location>
        <begin position="1"/>
        <end position="208"/>
    </location>
</feature>
<feature type="binding site" evidence="1">
    <location>
        <position position="83"/>
    </location>
    <ligand>
        <name>Zn(2+)</name>
        <dbReference type="ChEBI" id="CHEBI:29105"/>
    </ligand>
</feature>
<feature type="binding site" evidence="1">
    <location>
        <position position="86"/>
    </location>
    <ligand>
        <name>Zn(2+)</name>
        <dbReference type="ChEBI" id="CHEBI:29105"/>
    </ligand>
</feature>
<feature type="binding site" evidence="1">
    <location>
        <position position="100"/>
    </location>
    <ligand>
        <name>Zn(2+)</name>
        <dbReference type="ChEBI" id="CHEBI:29105"/>
    </ligand>
</feature>
<feature type="binding site" evidence="1">
    <location>
        <position position="103"/>
    </location>
    <ligand>
        <name>Zn(2+)</name>
        <dbReference type="ChEBI" id="CHEBI:29105"/>
    </ligand>
</feature>